<evidence type="ECO:0000255" key="1">
    <source>
        <dbReference type="HAMAP-Rule" id="MF_00059"/>
    </source>
</evidence>
<reference key="1">
    <citation type="submission" date="2007-07" db="EMBL/GenBank/DDBJ databases">
        <title>Complete genome sequence of Campylobacter jejuni subsp doylei 269.97 isolated from human blood.</title>
        <authorList>
            <person name="Fouts D.E."/>
            <person name="Mongodin E.F."/>
            <person name="Puiu D."/>
            <person name="Sebastian Y."/>
            <person name="Miller W.G."/>
            <person name="Mandrell R.E."/>
            <person name="Lastovica A.J."/>
            <person name="Nelson K.E."/>
        </authorList>
    </citation>
    <scope>NUCLEOTIDE SEQUENCE [LARGE SCALE GENOMIC DNA]</scope>
    <source>
        <strain>ATCC BAA-1458 / RM4099 / 269.97</strain>
    </source>
</reference>
<feature type="chain" id="PRO_0000323624" description="DNA-directed RNA polymerase subunit alpha">
    <location>
        <begin position="1"/>
        <end position="337"/>
    </location>
</feature>
<feature type="region of interest" description="Alpha N-terminal domain (alpha-NTD)" evidence="1">
    <location>
        <begin position="1"/>
        <end position="231"/>
    </location>
</feature>
<feature type="region of interest" description="Alpha C-terminal domain (alpha-CTD)" evidence="1">
    <location>
        <begin position="248"/>
        <end position="337"/>
    </location>
</feature>
<name>RPOA_CAMJD</name>
<keyword id="KW-0240">DNA-directed RNA polymerase</keyword>
<keyword id="KW-0548">Nucleotidyltransferase</keyword>
<keyword id="KW-0804">Transcription</keyword>
<keyword id="KW-0808">Transferase</keyword>
<dbReference type="EC" id="2.7.7.6" evidence="1"/>
<dbReference type="EMBL" id="CP000768">
    <property type="protein sequence ID" value="ABS43242.1"/>
    <property type="molecule type" value="Genomic_DNA"/>
</dbReference>
<dbReference type="SMR" id="A7H5U5"/>
<dbReference type="KEGG" id="cjd:JJD26997_1948"/>
<dbReference type="HOGENOM" id="CLU_053084_0_1_7"/>
<dbReference type="Proteomes" id="UP000002302">
    <property type="component" value="Chromosome"/>
</dbReference>
<dbReference type="GO" id="GO:0005737">
    <property type="term" value="C:cytoplasm"/>
    <property type="evidence" value="ECO:0007669"/>
    <property type="project" value="UniProtKB-ARBA"/>
</dbReference>
<dbReference type="GO" id="GO:0000428">
    <property type="term" value="C:DNA-directed RNA polymerase complex"/>
    <property type="evidence" value="ECO:0007669"/>
    <property type="project" value="UniProtKB-KW"/>
</dbReference>
<dbReference type="GO" id="GO:0003677">
    <property type="term" value="F:DNA binding"/>
    <property type="evidence" value="ECO:0007669"/>
    <property type="project" value="UniProtKB-UniRule"/>
</dbReference>
<dbReference type="GO" id="GO:0003899">
    <property type="term" value="F:DNA-directed RNA polymerase activity"/>
    <property type="evidence" value="ECO:0007669"/>
    <property type="project" value="UniProtKB-UniRule"/>
</dbReference>
<dbReference type="GO" id="GO:0046983">
    <property type="term" value="F:protein dimerization activity"/>
    <property type="evidence" value="ECO:0007669"/>
    <property type="project" value="InterPro"/>
</dbReference>
<dbReference type="GO" id="GO:0006351">
    <property type="term" value="P:DNA-templated transcription"/>
    <property type="evidence" value="ECO:0007669"/>
    <property type="project" value="UniProtKB-UniRule"/>
</dbReference>
<dbReference type="CDD" id="cd06928">
    <property type="entry name" value="RNAP_alpha_NTD"/>
    <property type="match status" value="1"/>
</dbReference>
<dbReference type="Gene3D" id="1.10.150.20">
    <property type="entry name" value="5' to 3' exonuclease, C-terminal subdomain"/>
    <property type="match status" value="1"/>
</dbReference>
<dbReference type="Gene3D" id="2.170.120.12">
    <property type="entry name" value="DNA-directed RNA polymerase, insert domain"/>
    <property type="match status" value="1"/>
</dbReference>
<dbReference type="Gene3D" id="3.30.1360.10">
    <property type="entry name" value="RNA polymerase, RBP11-like subunit"/>
    <property type="match status" value="1"/>
</dbReference>
<dbReference type="HAMAP" id="MF_00059">
    <property type="entry name" value="RNApol_bact_RpoA"/>
    <property type="match status" value="1"/>
</dbReference>
<dbReference type="InterPro" id="IPR011262">
    <property type="entry name" value="DNA-dir_RNA_pol_insert"/>
</dbReference>
<dbReference type="InterPro" id="IPR011263">
    <property type="entry name" value="DNA-dir_RNA_pol_RpoA/D/Rpb3"/>
</dbReference>
<dbReference type="InterPro" id="IPR011773">
    <property type="entry name" value="DNA-dir_RpoA"/>
</dbReference>
<dbReference type="InterPro" id="IPR036603">
    <property type="entry name" value="RBP11-like"/>
</dbReference>
<dbReference type="InterPro" id="IPR011260">
    <property type="entry name" value="RNAP_asu_C"/>
</dbReference>
<dbReference type="InterPro" id="IPR036643">
    <property type="entry name" value="RNApol_insert_sf"/>
</dbReference>
<dbReference type="NCBIfam" id="NF003517">
    <property type="entry name" value="PRK05182.2-3"/>
    <property type="match status" value="1"/>
</dbReference>
<dbReference type="NCBIfam" id="NF003519">
    <property type="entry name" value="PRK05182.2-5"/>
    <property type="match status" value="1"/>
</dbReference>
<dbReference type="NCBIfam" id="TIGR02027">
    <property type="entry name" value="rpoA"/>
    <property type="match status" value="1"/>
</dbReference>
<dbReference type="Pfam" id="PF01000">
    <property type="entry name" value="RNA_pol_A_bac"/>
    <property type="match status" value="1"/>
</dbReference>
<dbReference type="Pfam" id="PF03118">
    <property type="entry name" value="RNA_pol_A_CTD"/>
    <property type="match status" value="1"/>
</dbReference>
<dbReference type="Pfam" id="PF01193">
    <property type="entry name" value="RNA_pol_L"/>
    <property type="match status" value="1"/>
</dbReference>
<dbReference type="SMART" id="SM00662">
    <property type="entry name" value="RPOLD"/>
    <property type="match status" value="1"/>
</dbReference>
<dbReference type="SUPFAM" id="SSF47789">
    <property type="entry name" value="C-terminal domain of RNA polymerase alpha subunit"/>
    <property type="match status" value="1"/>
</dbReference>
<dbReference type="SUPFAM" id="SSF56553">
    <property type="entry name" value="Insert subdomain of RNA polymerase alpha subunit"/>
    <property type="match status" value="1"/>
</dbReference>
<dbReference type="SUPFAM" id="SSF55257">
    <property type="entry name" value="RBP11-like subunits of RNA polymerase"/>
    <property type="match status" value="1"/>
</dbReference>
<accession>A7H5U5</accession>
<comment type="function">
    <text evidence="1">DNA-dependent RNA polymerase catalyzes the transcription of DNA into RNA using the four ribonucleoside triphosphates as substrates.</text>
</comment>
<comment type="catalytic activity">
    <reaction evidence="1">
        <text>RNA(n) + a ribonucleoside 5'-triphosphate = RNA(n+1) + diphosphate</text>
        <dbReference type="Rhea" id="RHEA:21248"/>
        <dbReference type="Rhea" id="RHEA-COMP:14527"/>
        <dbReference type="Rhea" id="RHEA-COMP:17342"/>
        <dbReference type="ChEBI" id="CHEBI:33019"/>
        <dbReference type="ChEBI" id="CHEBI:61557"/>
        <dbReference type="ChEBI" id="CHEBI:140395"/>
        <dbReference type="EC" id="2.7.7.6"/>
    </reaction>
</comment>
<comment type="subunit">
    <text evidence="1">Homodimer. The RNAP catalytic core consists of 2 alpha, 1 beta, 1 beta' and 1 omega subunit. When a sigma factor is associated with the core the holoenzyme is formed, which can initiate transcription.</text>
</comment>
<comment type="domain">
    <text evidence="1">The N-terminal domain is essential for RNAP assembly and basal transcription, whereas the C-terminal domain is involved in interaction with transcriptional regulators and with upstream promoter elements.</text>
</comment>
<comment type="similarity">
    <text evidence="1">Belongs to the RNA polymerase alpha chain family.</text>
</comment>
<proteinExistence type="inferred from homology"/>
<protein>
    <recommendedName>
        <fullName evidence="1">DNA-directed RNA polymerase subunit alpha</fullName>
        <shortName evidence="1">RNAP subunit alpha</shortName>
        <ecNumber evidence="1">2.7.7.6</ecNumber>
    </recommendedName>
    <alternativeName>
        <fullName evidence="1">RNA polymerase subunit alpha</fullName>
    </alternativeName>
    <alternativeName>
        <fullName evidence="1">Transcriptase subunit alpha</fullName>
    </alternativeName>
</protein>
<gene>
    <name evidence="1" type="primary">rpoA</name>
    <name type="ordered locus">JJD26997_1948</name>
</gene>
<organism>
    <name type="scientific">Campylobacter jejuni subsp. doylei (strain ATCC BAA-1458 / RM4099 / 269.97)</name>
    <dbReference type="NCBI Taxonomy" id="360109"/>
    <lineage>
        <taxon>Bacteria</taxon>
        <taxon>Pseudomonadati</taxon>
        <taxon>Campylobacterota</taxon>
        <taxon>Epsilonproteobacteria</taxon>
        <taxon>Campylobacterales</taxon>
        <taxon>Campylobacteraceae</taxon>
        <taxon>Campylobacter</taxon>
    </lineage>
</organism>
<sequence>MRNITISAYTPTEFTIENISDTVAKISAWPFEIGYGITLAHPLRRLLYTSTVGYAPTAIHIDGVAHEFDSMRGMLEDVALFIINLKKLRFKIKSDSNKEIVEFSFKGSKEIYGKDLNNDQVEVVNKDAYLATINEDAELEFTLIVEKGIGYIPSEEIKEFLNDPKFIALDAFFTPVREATYDIEKVLFEDNPDYEKVVLTVTTDGQITPNEAFQNALEAMYKQLSVFDKITNVRSVIKNQATSNELENTKLLQNITDLNLSARSYNCLEKAGVVYIGELALMSVSELAGLKNLGKKSLDEIKNIMENIGFPVGTSKLSDNKEILKNKIAELKAQNEG</sequence>